<sequence>MFSFVDSRLLLLIAATVLLTRGEGEEDIQTGSCVQDGLTYNDKDVWKPEPCQICVCDSGNILCDEVICEDTSDCPNAEIPFGECCPICPDVDASPVYPESAGVEGPKGDTGPRGDRGLPGPPGRDGIPGQPGLPGPPGPPGPPGLGGNFAPQMSYGYDEKSAGVAVPGPMGPAGPRGLPGPPGAPGPQGFQGPPGEPGEPGASGPMGPRGPAGPPGKNGDDGEAGKPGRPGQRGPPGPQGARGLPGTAGLPGMKGHRGFSGLDGAKGQPGPAGPKGEPGSPGENGAPGQMGPRGLPGERGRPGPSGPAGARGNDGAPGAAGPPGPTGPAGPPGFPGAAGAKGETGPQGARGSEGPQGSRGEPGPPGPAGAAGPAGNPGADGQPGAKGATGAPGIAGAPGFPGARGPSGPQGPSGAPGPKGNSGEPGAPGNKGDTGAKGEPGPAGVQGPPGPAGEEGKRGARGEPGPAGLPGPAGERGAPGSRGFPGADGIAGPKGPPGERGSPGAVGPKGSPGEAGRPGEAGLPGAKGLTGSPGSPGPDGKTGPPGPAGQDGRPGPAGPPGARGQAGVMGFPGPKGAAGEPGKPGERGAPGPPGAVGAAGKDGEAGAQGPPGPTGPAGERGEQGPAGAPGFQGLPGPAGPPGEAGKPGEQGVPGNAGAPGPAGARGERGFPGERGVQGPPGPQGPRGANGAPGNDGAKGDAGAPGAPGNEGPPGLEGMPGERGAAGLPGAKGDRGDPGPKGADGAPGKDGLRGLTGPIGPPGPAGAPGDKGEAGPPGPAGPTGARGAPGDRGEPGPPGPAGFAGPPGADGQPGAKGETGDAGAKGDAGPPGPAGPTGAPGPAGZVGAPGPKGARGSAGPPGATGFPGAAGRVGPPGPSGNIGLPGPPGPAGKZGSKGPRGETGPAGRPGEPGPAGPPGPPGEKGSPGADGPIGAPGTPGPQGIAGQRGVVGLPGQRGERGFPGLPGPSGEPGKQGPSGASGERGPPGPMGPPGLAGPPGEAGREGAPGAEGAPGRDGAAGPKGDRGETGPAGPPGAPGAPGAPGPVGPAGKNGDRGETGPAGPAGPPGPAGARGPAGPQGPRGDKGETGEQGDRGMKGHRGFSGLQGPPGPPGAPGEQGPSGASGPAGPRGPPGSAGAAGKDGLNGLPGPIGPPGPRGRTGEVGPVGPPGPPGPPGPPGPPSGGFDLSFLPQPPQEKAHDGGRYYRADDANVMRDRDLEVDTTLKSLSQQIENIRSPEGTRKNPARTCRDLKMCHGDWKSGEYWIDPNQGCNLDAIKVYCNMETGETCVYPTQATIAQKNWYLSKNPKEKKHVWFGETMSDGFQFEYGGEGSNPADVAIQLTFLRLMSTEATQNVTYHCKNSVAYMDHDTGNLKKALLLQGANEIEIRAEGNSRFTYGVTEDGCTSHTGAWGKTVIEYKTTKTSRLPIIDLAPMDVGAPDQEFGIDIGPVCFL</sequence>
<evidence type="ECO:0000250" key="1"/>
<evidence type="ECO:0000250" key="2">
    <source>
        <dbReference type="UniProtKB" id="P02452"/>
    </source>
</evidence>
<evidence type="ECO:0000250" key="3">
    <source>
        <dbReference type="UniProtKB" id="P11087"/>
    </source>
</evidence>
<evidence type="ECO:0000255" key="4">
    <source>
        <dbReference type="PROSITE-ProRule" id="PRU00220"/>
    </source>
</evidence>
<evidence type="ECO:0000255" key="5">
    <source>
        <dbReference type="PROSITE-ProRule" id="PRU00793"/>
    </source>
</evidence>
<evidence type="ECO:0000256" key="6">
    <source>
        <dbReference type="SAM" id="MobiDB-lite"/>
    </source>
</evidence>
<evidence type="ECO:0000269" key="7">
    <source>
    </source>
</evidence>
<evidence type="ECO:0000269" key="8">
    <source>
    </source>
</evidence>
<evidence type="ECO:0000269" key="9">
    <source>
    </source>
</evidence>
<evidence type="ECO:0000269" key="10">
    <source>
    </source>
</evidence>
<evidence type="ECO:0000269" key="11">
    <source>
    </source>
</evidence>
<evidence type="ECO:0000269" key="12">
    <source>
    </source>
</evidence>
<evidence type="ECO:0000269" key="13">
    <source>
    </source>
</evidence>
<evidence type="ECO:0000303" key="14">
    <source>
    </source>
</evidence>
<evidence type="ECO:0000305" key="15"/>
<reference key="1">
    <citation type="journal article" date="1987" name="Gene">
        <title>Construction and characterization of cDNA clones encoding the 5' end of the chicken pro alpha 1(I) collagen mRNA.</title>
        <authorList>
            <person name="Finer M.H."/>
            <person name="Boedtker H."/>
            <person name="Doty P."/>
        </authorList>
    </citation>
    <scope>NUCLEOTIDE SEQUENCE [MRNA] OF 1-153</scope>
</reference>
<reference key="2">
    <citation type="journal article" date="1987" name="J. Biol. Chem.">
        <title>Unusual DNA sequences located within the promoter region and the first intron of the chicken pro-alpha 1(I) collagen gene.</title>
        <authorList>
            <person name="Finer M.H."/>
            <person name="Aho S."/>
            <person name="Gerstenfeld L.C."/>
            <person name="Boedtker H."/>
            <person name="Doty P."/>
        </authorList>
    </citation>
    <scope>NUCLEOTIDE SEQUENCE OF 1-144</scope>
</reference>
<reference key="3">
    <citation type="journal article" date="1970" name="Biochemistry">
        <title>Amino acid sequence of cyanogen bromide peptides from the amino-terminal region of chick skicollagen.</title>
        <authorList>
            <person name="Kang A.H."/>
            <person name="Gross J."/>
        </authorList>
    </citation>
    <scope>PROTEIN SEQUENCE OF 152-206</scope>
    <scope>PYROGLUTAMATE FORMATION AT GLN-152</scope>
    <scope>HYDROXYLATION AT PRO-179; PRO-182; PRO-185; PRO-194; PRO-197 AND PRO-200</scope>
</reference>
<reference key="4">
    <citation type="journal article" date="1975" name="J. Biol. Chem.">
        <title>The covalent structure of collagen. Amino acid sequence of alpha1-CB5 glycopeptide and alpha1-CB4 from chick skin collagen.</title>
        <authorList>
            <person name="Kang A.H."/>
            <person name="Dixit S.N."/>
            <person name="Corbett C."/>
            <person name="Gross J."/>
        </authorList>
    </citation>
    <scope>PROTEIN SEQUENCE OF 207-290</scope>
    <scope>HYDROXYLATION AT PRO-215; PRO-230; PRO-236; PRO-245; PRO-251; LYS-254; PRO-269; PRO-278; PRO-281 AND PRO-287</scope>
    <scope>GLYCOSYLATION AT LYS-254</scope>
</reference>
<reference key="5">
    <citation type="journal article" date="1982" name="Biochemistry">
        <title>Amino acid sequence of chick skin collagen alpha 1(I)-CB8 and the complete primary structure of the helical portion of the chick skin collagen alpha 1(I) chain.</title>
        <authorList>
            <person name="Highberger J.H."/>
            <person name="Corbett C."/>
            <person name="Dixit S.N."/>
            <person name="Yu W."/>
            <person name="Seyer J.M."/>
            <person name="Kang A.H."/>
            <person name="Gross J."/>
        </authorList>
    </citation>
    <scope>PROTEIN SEQUENCE OF 291-569</scope>
    <scope>HYDROXYLATION AT PRO-296; PRO-302; PRO-317; PRO-323; PRO-332; PRO-335; PRO-362; PRO-365; PRO-377; PRO-383; PRO-392; PRO-398; PRO-401; PRO-416; LYS-419; PRO-425; PRO-428; PRO-440; PRO-449; PRO-464; PRO-470; PRO-479; PRO-485; LYS-494; PRO-497; PRO-503; PRO-512; PRO-518; PRO-524; PRO-533; PRO-536; PRO-545; PRO-554 AND PRO-560</scope>
</reference>
<reference key="6">
    <citation type="journal article" date="1975" name="Biochemistry">
        <title>Covalent structure of collagen: amino acid sequence of alpha1-CB3 of chick skin collagen.</title>
        <authorList>
            <person name="Dixit S.N."/>
            <person name="Kang A.H."/>
            <person name="Gross J."/>
        </authorList>
    </citation>
    <scope>PROTEIN SEQUENCE OF 570-718</scope>
    <scope>HYDROXYLATION AT PRO-572; PRO-581; PRO-584; PRO-590; PRO-593; PRO-611; PRO-629; PRO-635; PRO-641; PRO-647; PRO-653; PRO-659; PRO-671; PRO-680; PRO-692; PRO-704; PRO-707 AND PRO-713</scope>
</reference>
<reference key="7">
    <citation type="journal article" date="1975" name="Biochemistry">
        <title>The amino acid sequence of chick skin collagen alpha1-CB7.</title>
        <authorList>
            <person name="Highberger J.H."/>
            <person name="Corbett C."/>
            <person name="Kang A.H."/>
            <person name="Gross J."/>
        </authorList>
    </citation>
    <scope>PROTEIN SEQUENCE OF 719-989</scope>
    <scope>HYDROXYLATION AT PRO-719; PRO-728; PRO-737; LYS-740; PRO-746; PRO-761; PRO-767; PRO-776; PRO-788; PRO-794; PRO-797; PRO-806; PRO-812; PRO-830; PRO-839; PRO-848; LYS-851; PRO-860; PRO-866; PRO-875; PRO-884; PRO-887; PRO-908; PRO-911; PRO-917; PRO-920; PRO-926; PRO-935; PRO-953; PRO-962; PRO-965; PRO-971 AND PRO-986</scope>
</reference>
<reference key="8">
    <citation type="journal article" date="1975" name="Biochemistry">
        <title>Covalent structure of collagen: amino acid sequence of alpha1-CB6A of chick skin collagen.</title>
        <authorList>
            <person name="Dixit S.N."/>
            <person name="Seyer J.M."/>
            <person name="Oronsky A.O."/>
            <person name="Corbett C."/>
            <person name="Kang A.H."/>
            <person name="Gross J."/>
        </authorList>
    </citation>
    <scope>PROTEIN SEQUENCE OF 990-1096</scope>
    <scope>HYDROXYLATION AT PRO-992; PRO-998; PRO-1007; PRO-1013; LYS-1022; PRO-1034; PRO-1037; PRO-1040; PRO-1067 AND LYS-1085</scope>
    <scope>LACK OF GLYCOSYLATION AT LYS-1022 AND LYS-1085</scope>
</reference>
<reference key="9">
    <citation type="journal article" date="1978" name="Biochemistry">
        <title>Covalent structure of collagen: amino acid sequence of chick skin collagen alpha1(1)-CB6B.</title>
        <authorList>
            <person name="Dixit S.N."/>
            <person name="Seyer J.M."/>
            <person name="Kang A.H."/>
            <person name="Gross J."/>
        </authorList>
    </citation>
    <scope>PROTEIN SEQUENCE OF 1097-1187</scope>
    <scope>HYDROXYLATION AT LYS-1097; PRO-1109; PRO-1112; PRO-1115; PRO-1133; PRO-1148; PRO-1153; PRO-1154; PRO-1169; PRO-1172; PRO-1175 AND PRO-1178</scope>
    <scope>GLYCOSYLATION AT LYS-1097</scope>
</reference>
<reference key="10">
    <citation type="journal article" date="1972" name="Biochem. Biophys. Res. Commun.">
        <title>Evidence for a previously undetected sequence at the carboxyterminus of the alpha 1 chain of chicken bone collagen.</title>
        <authorList>
            <person name="Eyre D.R."/>
            <person name="Glimcher M.J."/>
        </authorList>
    </citation>
    <scope>PROTEIN SEQUENCE OF 1200-1205</scope>
</reference>
<reference key="11">
    <citation type="journal article" date="1981" name="Biochemistry">
        <title>Sequence determination and analysis of the 3' region of chicken pro-alpha 1(I) and pro-alpha 2(I) collagen messenger ribonucleic acids including the carboxy-terminal propeptide sequences.</title>
        <authorList>
            <person name="Fuller F."/>
            <person name="Boedtker H."/>
        </authorList>
    </citation>
    <scope>NUCLEOTIDE SEQUENCE [MRNA] OF 981-1453</scope>
    <scope>C-TERMINAL PROPEPTIDE CLEAVAGE SITE</scope>
</reference>
<reference key="12">
    <citation type="journal article" date="1980" name="FEBS Lett.">
        <title>Nucleotide sequence of a collagen cDNA-fragment coding for the carboxyl end of pro alpha 1(I)-chains.</title>
        <authorList>
            <person name="Showalter A.M."/>
            <person name="Pesciotta D.M."/>
            <person name="Eikenberry E.F."/>
            <person name="Yamamoto T."/>
            <person name="Pastan I."/>
            <person name="Decrombrugghe B."/>
            <person name="Fietzek P.P."/>
            <person name="Olsen B.R."/>
        </authorList>
    </citation>
    <scope>NUCLEOTIDE SEQUENCE [MRNA] OF 1311-1453</scope>
</reference>
<gene>
    <name type="primary">COL1A1</name>
</gene>
<feature type="signal peptide">
    <location>
        <begin position="1"/>
        <end position="22"/>
    </location>
</feature>
<feature type="propeptide" id="PRO_0000005716" description="N-terminal propeptide" evidence="11">
    <location>
        <begin position="23"/>
        <end position="151"/>
    </location>
</feature>
<feature type="chain" id="PRO_0000005717" description="Collagen alpha-1(I) chain" evidence="14">
    <location>
        <begin position="152"/>
        <end position="1207"/>
    </location>
</feature>
<feature type="propeptide" id="PRO_0000005718" description="C-terminal propeptide" evidence="14">
    <location>
        <begin position="1208"/>
        <end position="1453"/>
    </location>
</feature>
<feature type="domain" description="VWFC" evidence="4">
    <location>
        <begin position="31"/>
        <end position="89"/>
    </location>
</feature>
<feature type="domain" description="Fibrillar collagen NC1" evidence="5">
    <location>
        <begin position="1218"/>
        <end position="1453"/>
    </location>
</feature>
<feature type="region of interest" description="Disordered" evidence="6">
    <location>
        <begin position="98"/>
        <end position="1203"/>
    </location>
</feature>
<feature type="compositionally biased region" description="Basic and acidic residues" evidence="6">
    <location>
        <begin position="106"/>
        <end position="116"/>
    </location>
</feature>
<feature type="compositionally biased region" description="Pro residues" evidence="6">
    <location>
        <begin position="131"/>
        <end position="143"/>
    </location>
</feature>
<feature type="compositionally biased region" description="Low complexity" evidence="6">
    <location>
        <begin position="162"/>
        <end position="176"/>
    </location>
</feature>
<feature type="compositionally biased region" description="Low complexity" evidence="6">
    <location>
        <begin position="187"/>
        <end position="206"/>
    </location>
</feature>
<feature type="compositionally biased region" description="Low complexity" evidence="6">
    <location>
        <begin position="265"/>
        <end position="284"/>
    </location>
</feature>
<feature type="compositionally biased region" description="Low complexity" evidence="6">
    <location>
        <begin position="307"/>
        <end position="319"/>
    </location>
</feature>
<feature type="compositionally biased region" description="Pro residues" evidence="6">
    <location>
        <begin position="320"/>
        <end position="334"/>
    </location>
</feature>
<feature type="compositionally biased region" description="Low complexity" evidence="6">
    <location>
        <begin position="350"/>
        <end position="361"/>
    </location>
</feature>
<feature type="compositionally biased region" description="Low complexity" evidence="6">
    <location>
        <begin position="368"/>
        <end position="418"/>
    </location>
</feature>
<feature type="compositionally biased region" description="Low complexity" evidence="6">
    <location>
        <begin position="463"/>
        <end position="482"/>
    </location>
</feature>
<feature type="compositionally biased region" description="Low complexity" evidence="6">
    <location>
        <begin position="527"/>
        <end position="581"/>
    </location>
</feature>
<feature type="compositionally biased region" description="Low complexity" evidence="6">
    <location>
        <begin position="623"/>
        <end position="664"/>
    </location>
</feature>
<feature type="compositionally biased region" description="Low complexity" evidence="6">
    <location>
        <begin position="685"/>
        <end position="722"/>
    </location>
</feature>
<feature type="compositionally biased region" description="Low complexity" evidence="6">
    <location>
        <begin position="800"/>
        <end position="827"/>
    </location>
</feature>
<feature type="compositionally biased region" description="Low complexity" evidence="6">
    <location>
        <begin position="835"/>
        <end position="883"/>
    </location>
</feature>
<feature type="compositionally biased region" description="Low complexity" evidence="6">
    <location>
        <begin position="890"/>
        <end position="908"/>
    </location>
</feature>
<feature type="compositionally biased region" description="Pro residues" evidence="6">
    <location>
        <begin position="910"/>
        <end position="920"/>
    </location>
</feature>
<feature type="compositionally biased region" description="Pro residues" evidence="6">
    <location>
        <begin position="985"/>
        <end position="995"/>
    </location>
</feature>
<feature type="compositionally biased region" description="Low complexity" evidence="6">
    <location>
        <begin position="997"/>
        <end position="1021"/>
    </location>
</feature>
<feature type="compositionally biased region" description="Pro residues" evidence="6">
    <location>
        <begin position="1031"/>
        <end position="1046"/>
    </location>
</feature>
<feature type="compositionally biased region" description="Low complexity" evidence="6">
    <location>
        <begin position="1070"/>
        <end position="1081"/>
    </location>
</feature>
<feature type="compositionally biased region" description="Basic and acidic residues" evidence="6">
    <location>
        <begin position="1082"/>
        <end position="1096"/>
    </location>
</feature>
<feature type="compositionally biased region" description="Low complexity" evidence="6">
    <location>
        <begin position="1115"/>
        <end position="1139"/>
    </location>
</feature>
<feature type="compositionally biased region" description="Pro residues" evidence="6">
    <location>
        <begin position="1166"/>
        <end position="1181"/>
    </location>
</feature>
<feature type="binding site" evidence="1">
    <location>
        <position position="1266"/>
    </location>
    <ligand>
        <name>Ca(2+)</name>
        <dbReference type="ChEBI" id="CHEBI:29108"/>
    </ligand>
</feature>
<feature type="binding site" evidence="1">
    <location>
        <position position="1268"/>
    </location>
    <ligand>
        <name>Ca(2+)</name>
        <dbReference type="ChEBI" id="CHEBI:29108"/>
    </ligand>
</feature>
<feature type="binding site" evidence="1">
    <location>
        <position position="1269"/>
    </location>
    <ligand>
        <name>Ca(2+)</name>
        <dbReference type="ChEBI" id="CHEBI:29108"/>
    </ligand>
</feature>
<feature type="binding site" evidence="1">
    <location>
        <position position="1271"/>
    </location>
    <ligand>
        <name>Ca(2+)</name>
        <dbReference type="ChEBI" id="CHEBI:29108"/>
    </ligand>
</feature>
<feature type="binding site" evidence="1">
    <location>
        <position position="1274"/>
    </location>
    <ligand>
        <name>Ca(2+)</name>
        <dbReference type="ChEBI" id="CHEBI:29108"/>
    </ligand>
</feature>
<feature type="site" description="Not glycosylated" evidence="8">
    <location>
        <position position="1022"/>
    </location>
</feature>
<feature type="site" description="Not glycosylated" evidence="8">
    <location>
        <position position="1085"/>
    </location>
</feature>
<feature type="modified residue" description="Pyrrolidone carboxylic acid" evidence="11">
    <location>
        <position position="152"/>
    </location>
</feature>
<feature type="modified residue" description="Allysine" evidence="2">
    <location>
        <position position="160"/>
    </location>
</feature>
<feature type="modified residue" description="4-hydroxyproline" evidence="11">
    <location>
        <position position="179"/>
    </location>
</feature>
<feature type="modified residue" description="4-hydroxyproline" evidence="11">
    <location>
        <position position="182"/>
    </location>
</feature>
<feature type="modified residue" description="4-hydroxyproline" evidence="11">
    <location>
        <position position="185"/>
    </location>
</feature>
<feature type="modified residue" description="4-hydroxyproline" evidence="11">
    <location>
        <position position="194"/>
    </location>
</feature>
<feature type="modified residue" description="4-hydroxyproline" evidence="11">
    <location>
        <position position="197"/>
    </location>
</feature>
<feature type="modified residue" description="4-hydroxyproline" evidence="11">
    <location>
        <position position="200"/>
    </location>
</feature>
<feature type="modified residue" description="4-hydroxyproline" evidence="9">
    <location>
        <position position="215"/>
    </location>
</feature>
<feature type="modified residue" description="4-hydroxyproline" evidence="9">
    <location>
        <position position="230"/>
    </location>
</feature>
<feature type="modified residue" description="4-hydroxyproline" evidence="9">
    <location>
        <position position="236"/>
    </location>
</feature>
<feature type="modified residue" description="4-hydroxyproline" evidence="9">
    <location>
        <position position="245"/>
    </location>
</feature>
<feature type="modified residue" description="4-hydroxyproline" evidence="9">
    <location>
        <position position="251"/>
    </location>
</feature>
<feature type="modified residue" description="5-hydroxylysine; alternate" evidence="9">
    <location>
        <position position="254"/>
    </location>
</feature>
<feature type="modified residue" description="4-hydroxyproline" evidence="9">
    <location>
        <position position="269"/>
    </location>
</feature>
<feature type="modified residue" description="4-hydroxyproline" evidence="9">
    <location>
        <position position="278"/>
    </location>
</feature>
<feature type="modified residue" description="4-hydroxyproline" evidence="9">
    <location>
        <position position="281"/>
    </location>
</feature>
<feature type="modified residue" description="4-hydroxyproline" evidence="9">
    <location>
        <position position="287"/>
    </location>
</feature>
<feature type="modified residue" description="4-hydroxyproline" evidence="12">
    <location>
        <position position="296"/>
    </location>
</feature>
<feature type="modified residue" description="4-hydroxyproline" evidence="12">
    <location>
        <position position="302"/>
    </location>
</feature>
<feature type="modified residue" description="4-hydroxyproline" evidence="12">
    <location>
        <position position="317"/>
    </location>
</feature>
<feature type="modified residue" description="4-hydroxyproline" evidence="12">
    <location>
        <position position="323"/>
    </location>
</feature>
<feature type="modified residue" description="4-hydroxyproline" evidence="12">
    <location>
        <position position="332"/>
    </location>
</feature>
<feature type="modified residue" description="4-hydroxyproline" evidence="12">
    <location>
        <position position="335"/>
    </location>
</feature>
<feature type="modified residue" description="4-hydroxyproline" evidence="12">
    <location>
        <position position="362"/>
    </location>
</feature>
<feature type="modified residue" description="4-hydroxyproline" evidence="12">
    <location>
        <position position="365"/>
    </location>
</feature>
<feature type="modified residue" description="4-hydroxyproline" evidence="12">
    <location>
        <position position="377"/>
    </location>
</feature>
<feature type="modified residue" description="4-hydroxyproline" evidence="12">
    <location>
        <position position="383"/>
    </location>
</feature>
<feature type="modified residue" description="4-hydroxyproline" evidence="12">
    <location>
        <position position="392"/>
    </location>
</feature>
<feature type="modified residue" description="4-hydroxyproline" evidence="12">
    <location>
        <position position="398"/>
    </location>
</feature>
<feature type="modified residue" description="4-hydroxyproline" evidence="12">
    <location>
        <position position="401"/>
    </location>
</feature>
<feature type="modified residue" description="4-hydroxyproline" evidence="12">
    <location>
        <position position="416"/>
    </location>
</feature>
<feature type="modified residue" description="5-hydroxylysine" evidence="12">
    <location>
        <position position="419"/>
    </location>
</feature>
<feature type="modified residue" description="4-hydroxyproline" evidence="12">
    <location>
        <position position="425"/>
    </location>
</feature>
<feature type="modified residue" description="4-hydroxyproline" evidence="12">
    <location>
        <position position="428"/>
    </location>
</feature>
<feature type="modified residue" description="4-hydroxyproline" evidence="12">
    <location>
        <position position="440"/>
    </location>
</feature>
<feature type="modified residue" description="4-hydroxyproline" evidence="12">
    <location>
        <position position="449"/>
    </location>
</feature>
<feature type="modified residue" description="4-hydroxyproline" evidence="12">
    <location>
        <position position="464"/>
    </location>
</feature>
<feature type="modified residue" description="4-hydroxyproline" evidence="12">
    <location>
        <position position="470"/>
    </location>
</feature>
<feature type="modified residue" description="4-hydroxyproline" evidence="12">
    <location>
        <position position="479"/>
    </location>
</feature>
<feature type="modified residue" description="4-hydroxyproline" evidence="12">
    <location>
        <position position="485"/>
    </location>
</feature>
<feature type="modified residue" description="5-hydroxylysine" evidence="12">
    <location>
        <position position="494"/>
    </location>
</feature>
<feature type="modified residue" description="4-hydroxyproline" evidence="12">
    <location>
        <position position="497"/>
    </location>
</feature>
<feature type="modified residue" description="4-hydroxyproline" evidence="12">
    <location>
        <position position="503"/>
    </location>
</feature>
<feature type="modified residue" description="4-hydroxyproline" evidence="12">
    <location>
        <position position="512"/>
    </location>
</feature>
<feature type="modified residue" description="4-hydroxyproline" evidence="12">
    <location>
        <position position="518"/>
    </location>
</feature>
<feature type="modified residue" description="4-hydroxyproline" evidence="12">
    <location>
        <position position="524"/>
    </location>
</feature>
<feature type="modified residue" description="4-hydroxyproline" evidence="12">
    <location>
        <position position="533"/>
    </location>
</feature>
<feature type="modified residue" description="4-hydroxyproline" evidence="12">
    <location>
        <position position="536"/>
    </location>
</feature>
<feature type="modified residue" description="4-hydroxyproline" evidence="12">
    <location>
        <position position="545"/>
    </location>
</feature>
<feature type="modified residue" description="4-hydroxyproline" evidence="12">
    <location>
        <position position="554"/>
    </location>
</feature>
<feature type="modified residue" description="4-hydroxyproline" evidence="12">
    <location>
        <position position="560"/>
    </location>
</feature>
<feature type="modified residue" description="4-hydroxyproline" evidence="7">
    <location>
        <position position="572"/>
    </location>
</feature>
<feature type="modified residue" description="4-hydroxyproline" evidence="7">
    <location>
        <position position="581"/>
    </location>
</feature>
<feature type="modified residue" description="4-hydroxyproline" evidence="7">
    <location>
        <position position="584"/>
    </location>
</feature>
<feature type="modified residue" description="4-hydroxyproline" evidence="7">
    <location>
        <position position="590"/>
    </location>
</feature>
<feature type="modified residue" description="4-hydroxyproline" evidence="7">
    <location>
        <position position="593"/>
    </location>
</feature>
<feature type="modified residue" description="4-hydroxyproline" evidence="7">
    <location>
        <position position="611"/>
    </location>
</feature>
<feature type="modified residue" description="4-hydroxyproline" evidence="7">
    <location>
        <position position="629"/>
    </location>
</feature>
<feature type="modified residue" description="4-hydroxyproline" evidence="7">
    <location>
        <position position="635"/>
    </location>
</feature>
<feature type="modified residue" description="4-hydroxyproline" evidence="7">
    <location>
        <position position="641"/>
    </location>
</feature>
<feature type="modified residue" description="4-hydroxyproline" evidence="7">
    <location>
        <position position="647"/>
    </location>
</feature>
<feature type="modified residue" description="4-hydroxyproline" evidence="7">
    <location>
        <position position="653"/>
    </location>
</feature>
<feature type="modified residue" description="4-hydroxyproline" evidence="7">
    <location>
        <position position="659"/>
    </location>
</feature>
<feature type="modified residue" description="4-hydroxyproline" evidence="7">
    <location>
        <position position="671"/>
    </location>
</feature>
<feature type="modified residue" description="4-hydroxyproline" evidence="7">
    <location>
        <position position="680"/>
    </location>
</feature>
<feature type="modified residue" description="4-hydroxyproline" evidence="7">
    <location>
        <position position="692"/>
    </location>
</feature>
<feature type="modified residue" description="4-hydroxyproline" evidence="7">
    <location>
        <position position="704"/>
    </location>
</feature>
<feature type="modified residue" description="4-hydroxyproline" evidence="7">
    <location>
        <position position="707"/>
    </location>
</feature>
<feature type="modified residue" description="4-hydroxyproline" evidence="7">
    <location>
        <position position="713"/>
    </location>
</feature>
<feature type="modified residue" description="4-hydroxyproline" evidence="10">
    <location>
        <position position="719"/>
    </location>
</feature>
<feature type="modified residue" description="4-hydroxyproline" evidence="10">
    <location>
        <position position="728"/>
    </location>
</feature>
<feature type="modified residue" description="4-hydroxyproline" evidence="10">
    <location>
        <position position="737"/>
    </location>
</feature>
<feature type="modified residue" description="5-hydroxylysine" evidence="10">
    <location>
        <position position="740"/>
    </location>
</feature>
<feature type="modified residue" description="4-hydroxyproline" evidence="10">
    <location>
        <position position="746"/>
    </location>
</feature>
<feature type="modified residue" description="4-hydroxyproline" evidence="10">
    <location>
        <position position="761"/>
    </location>
</feature>
<feature type="modified residue" description="4-hydroxyproline" evidence="10">
    <location>
        <position position="767"/>
    </location>
</feature>
<feature type="modified residue" description="4-hydroxyproline" evidence="10">
    <location>
        <position position="776"/>
    </location>
</feature>
<feature type="modified residue" description="4-hydroxyproline" evidence="10">
    <location>
        <position position="788"/>
    </location>
</feature>
<feature type="modified residue" description="4-hydroxyproline" evidence="10">
    <location>
        <position position="794"/>
    </location>
</feature>
<feature type="modified residue" description="4-hydroxyproline" evidence="10">
    <location>
        <position position="797"/>
    </location>
</feature>
<feature type="modified residue" description="4-hydroxyproline" evidence="10">
    <location>
        <position position="806"/>
    </location>
</feature>
<feature type="modified residue" description="4-hydroxyproline" evidence="10">
    <location>
        <position position="812"/>
    </location>
</feature>
<feature type="modified residue" description="4-hydroxyproline" evidence="10">
    <location>
        <position position="830"/>
    </location>
</feature>
<feature type="modified residue" description="4-hydroxyproline" evidence="10">
    <location>
        <position position="839"/>
    </location>
</feature>
<feature type="modified residue" description="4-hydroxyproline" evidence="10">
    <location>
        <position position="848"/>
    </location>
</feature>
<feature type="modified residue" description="5-hydroxylysine" evidence="10">
    <location>
        <position position="851"/>
    </location>
</feature>
<feature type="modified residue" description="4-hydroxyproline" evidence="10">
    <location>
        <position position="860"/>
    </location>
</feature>
<feature type="modified residue" description="4-hydroxyproline" evidence="10">
    <location>
        <position position="866"/>
    </location>
</feature>
<feature type="modified residue" description="3-hydroxyproline" evidence="3">
    <location>
        <position position="874"/>
    </location>
</feature>
<feature type="modified residue" description="4-hydroxyproline" evidence="10">
    <location>
        <position position="875"/>
    </location>
</feature>
<feature type="modified residue" description="4-hydroxyproline" evidence="10">
    <location>
        <position position="884"/>
    </location>
</feature>
<feature type="modified residue" description="4-hydroxyproline" evidence="10">
    <location>
        <position position="887"/>
    </location>
</feature>
<feature type="modified residue" description="4-hydroxyproline" evidence="10">
    <location>
        <position position="908"/>
    </location>
</feature>
<feature type="modified residue" description="4-hydroxyproline" evidence="10">
    <location>
        <position position="911"/>
    </location>
</feature>
<feature type="modified residue" description="4-hydroxyproline" evidence="10">
    <location>
        <position position="917"/>
    </location>
</feature>
<feature type="modified residue" description="4-hydroxyproline" evidence="10">
    <location>
        <position position="920"/>
    </location>
</feature>
<feature type="modified residue" description="4-hydroxyproline" evidence="10">
    <location>
        <position position="926"/>
    </location>
</feature>
<feature type="modified residue" description="4-hydroxyproline" evidence="10">
    <location>
        <position position="935"/>
    </location>
</feature>
<feature type="modified residue" description="4-hydroxyproline" evidence="10">
    <location>
        <position position="953"/>
    </location>
</feature>
<feature type="modified residue" description="4-hydroxyproline" evidence="10">
    <location>
        <position position="962"/>
    </location>
</feature>
<feature type="modified residue" description="4-hydroxyproline" evidence="10">
    <location>
        <position position="965"/>
    </location>
</feature>
<feature type="modified residue" description="4-hydroxyproline" evidence="10">
    <location>
        <position position="971"/>
    </location>
</feature>
<feature type="modified residue" description="4-hydroxyproline" evidence="10">
    <location>
        <position position="986"/>
    </location>
</feature>
<feature type="modified residue" description="4-hydroxyproline" evidence="8">
    <location>
        <position position="992"/>
    </location>
</feature>
<feature type="modified residue" description="4-hydroxyproline" evidence="8">
    <location>
        <position position="998"/>
    </location>
</feature>
<feature type="modified residue" description="4-hydroxyproline" evidence="8">
    <location>
        <position position="1007"/>
    </location>
</feature>
<feature type="modified residue" description="4-hydroxyproline" evidence="8">
    <location>
        <position position="1013"/>
    </location>
</feature>
<feature type="modified residue" description="5-hydroxylysine; partial" evidence="8">
    <location>
        <position position="1022"/>
    </location>
</feature>
<feature type="modified residue" description="4-hydroxyproline" evidence="8">
    <location>
        <position position="1034"/>
    </location>
</feature>
<feature type="modified residue" description="4-hydroxyproline" evidence="8">
    <location>
        <position position="1037"/>
    </location>
</feature>
<feature type="modified residue" description="4-hydroxyproline" evidence="8">
    <location>
        <position position="1040"/>
    </location>
</feature>
<feature type="modified residue" description="4-hydroxyproline" evidence="8">
    <location>
        <position position="1067"/>
    </location>
</feature>
<feature type="modified residue" description="5-hydroxylysine; partial" evidence="8">
    <location>
        <position position="1085"/>
    </location>
</feature>
<feature type="modified residue" description="5-hydroxylysine; alternate" evidence="13">
    <location>
        <position position="1097"/>
    </location>
</feature>
<feature type="modified residue" description="4-hydroxyproline" evidence="13">
    <location>
        <position position="1109"/>
    </location>
</feature>
<feature type="modified residue" description="4-hydroxyproline" evidence="13">
    <location>
        <position position="1112"/>
    </location>
</feature>
<feature type="modified residue" description="4-hydroxyproline" evidence="13">
    <location>
        <position position="1115"/>
    </location>
</feature>
<feature type="modified residue" description="4-hydroxyproline" evidence="13">
    <location>
        <position position="1133"/>
    </location>
</feature>
<feature type="modified residue" description="4-hydroxyproline" evidence="13">
    <location>
        <position position="1148"/>
    </location>
</feature>
<feature type="modified residue" description="3-hydroxyproline" evidence="13">
    <location>
        <position position="1153"/>
    </location>
</feature>
<feature type="modified residue" description="4-hydroxyproline" evidence="13">
    <location>
        <position position="1154"/>
    </location>
</feature>
<feature type="modified residue" description="3-hydroxyproline" evidence="3">
    <location>
        <position position="1168"/>
    </location>
</feature>
<feature type="modified residue" description="4-hydroxyproline" evidence="13">
    <location>
        <position position="1169"/>
    </location>
</feature>
<feature type="modified residue" description="3-hydroxyproline" evidence="3">
    <location>
        <position position="1171"/>
    </location>
</feature>
<feature type="modified residue" description="4-hydroxyproline" evidence="13">
    <location>
        <position position="1172"/>
    </location>
</feature>
<feature type="modified residue" description="3-hydroxyproline" evidence="3">
    <location>
        <position position="1174"/>
    </location>
</feature>
<feature type="modified residue" description="4-hydroxyproline" evidence="13">
    <location>
        <position position="1175"/>
    </location>
</feature>
<feature type="modified residue" description="4-hydroxyproline" evidence="13">
    <location>
        <position position="1178"/>
    </location>
</feature>
<feature type="modified residue" description="4-hydroxyproline" evidence="3">
    <location>
        <position position="1181"/>
    </location>
</feature>
<feature type="modified residue" description="Allysine" evidence="2">
    <location>
        <position position="1197"/>
    </location>
</feature>
<feature type="glycosylation site" description="O-linked (Gal...) hydroxylysine; partial" evidence="9">
    <location>
        <position position="254"/>
    </location>
</feature>
<feature type="glycosylation site" description="O-linked (Gal...) hydroxylysine; partial" evidence="13">
    <location>
        <position position="1097"/>
    </location>
</feature>
<feature type="glycosylation site" description="N-linked (GlcNAc...) asparagine" evidence="1">
    <location>
        <position position="1354"/>
    </location>
</feature>
<feature type="disulfide bond" evidence="5">
    <location>
        <begin position="1248"/>
        <end position="1280"/>
    </location>
</feature>
<feature type="disulfide bond" description="Interchain (with C-1271)" evidence="5">
    <location>
        <position position="1254"/>
    </location>
</feature>
<feature type="disulfide bond" description="Interchain (with C-1254)" evidence="5">
    <location>
        <position position="1271"/>
    </location>
</feature>
<feature type="disulfide bond" evidence="5">
    <location>
        <begin position="1288"/>
        <end position="1451"/>
    </location>
</feature>
<feature type="disulfide bond" evidence="5">
    <location>
        <begin position="1359"/>
        <end position="1404"/>
    </location>
</feature>
<feature type="sequence conflict" description="In Ref. 12; AAA48671." evidence="15" ref="12">
    <original>Q</original>
    <variation>H</variation>
    <location>
        <position position="1441"/>
    </location>
</feature>
<keyword id="KW-0106">Calcium</keyword>
<keyword id="KW-0176">Collagen</keyword>
<keyword id="KW-0903">Direct protein sequencing</keyword>
<keyword id="KW-1015">Disulfide bond</keyword>
<keyword id="KW-0272">Extracellular matrix</keyword>
<keyword id="KW-0325">Glycoprotein</keyword>
<keyword id="KW-0379">Hydroxylation</keyword>
<keyword id="KW-0479">Metal-binding</keyword>
<keyword id="KW-0873">Pyrrolidone carboxylic acid</keyword>
<keyword id="KW-1185">Reference proteome</keyword>
<keyword id="KW-0677">Repeat</keyword>
<keyword id="KW-0964">Secreted</keyword>
<keyword id="KW-0732">Signal</keyword>
<name>CO1A1_CHICK</name>
<comment type="function">
    <text>Type I collagen is a member of group I collagen (fibrillar forming collagen).</text>
</comment>
<comment type="subunit">
    <text>Trimers of one alpha 2(I) and two alpha 1(I) chains.</text>
</comment>
<comment type="subcellular location">
    <subcellularLocation>
        <location evidence="5">Secreted</location>
        <location evidence="5">Extracellular space</location>
        <location evidence="5">Extracellular matrix</location>
    </subcellularLocation>
</comment>
<comment type="tissue specificity">
    <text>Forms the fibrils of tendon, ligaments and bones. In bones the fibrils are mineralized with calcium hydroxyapatite.</text>
</comment>
<comment type="domain">
    <text evidence="1">The C-terminal propeptide, also known as COLFI domain, have crucial roles in tissue growth and repair by controlling both the intracellular assembly of procollagen molecules and the extracellular assembly of collagen fibrils. It binds a calcium ion which is essential for its function (By similarity).</text>
</comment>
<comment type="PTM">
    <text evidence="7 10 11 12 13">Contains mostly 4-hydroxyproline. Proline residues at the third position of the tripeptide repeating unit (G-X-Y) are 4-hydroxylated in some or all of the chains.</text>
</comment>
<comment type="PTM">
    <text evidence="13">Contains 3-hydroxyproline. This modification occurs on the first proline residue in the sequence motif Gly-Pro-Hyp, where Hyp is 4-hydroxyproline.</text>
</comment>
<comment type="PTM">
    <text evidence="8 9 13">Lysine residues at the third position of the tripeptide repeating unit (G-X-Y) are 5-hydroxylated in some or all of the chains.</text>
</comment>
<comment type="PTM">
    <text evidence="9 13">O-glycosylated on hydroxylated lysine residues. The O-linked glycan consists of a Glc-Gal disaccharide.</text>
</comment>
<comment type="similarity">
    <text evidence="5">Belongs to the fibrillar collagen family.</text>
</comment>
<accession>P02457</accession>
<proteinExistence type="evidence at protein level"/>
<protein>
    <recommendedName>
        <fullName>Collagen alpha-1(I) chain</fullName>
    </recommendedName>
    <alternativeName>
        <fullName>Alpha-1 type I collagen</fullName>
    </alternativeName>
</protein>
<organism>
    <name type="scientific">Gallus gallus</name>
    <name type="common">Chicken</name>
    <dbReference type="NCBI Taxonomy" id="9031"/>
    <lineage>
        <taxon>Eukaryota</taxon>
        <taxon>Metazoa</taxon>
        <taxon>Chordata</taxon>
        <taxon>Craniata</taxon>
        <taxon>Vertebrata</taxon>
        <taxon>Euteleostomi</taxon>
        <taxon>Archelosauria</taxon>
        <taxon>Archosauria</taxon>
        <taxon>Dinosauria</taxon>
        <taxon>Saurischia</taxon>
        <taxon>Theropoda</taxon>
        <taxon>Coelurosauria</taxon>
        <taxon>Aves</taxon>
        <taxon>Neognathae</taxon>
        <taxon>Galloanserae</taxon>
        <taxon>Galliformes</taxon>
        <taxon>Phasianidae</taxon>
        <taxon>Phasianinae</taxon>
        <taxon>Gallus</taxon>
    </lineage>
</organism>
<dbReference type="EMBL" id="M17839">
    <property type="protein sequence ID" value="AAA48704.1"/>
    <property type="molecule type" value="Genomic_DNA"/>
</dbReference>
<dbReference type="EMBL" id="M17838">
    <property type="protein sequence ID" value="AAA48704.1"/>
    <property type="status" value="JOINED"/>
    <property type="molecule type" value="Genomic_DNA"/>
</dbReference>
<dbReference type="EMBL" id="V00401">
    <property type="protein sequence ID" value="CAA23695.1"/>
    <property type="molecule type" value="mRNA"/>
</dbReference>
<dbReference type="EMBL" id="M10571">
    <property type="protein sequence ID" value="AAA48671.1"/>
    <property type="status" value="ALT_SEQ"/>
    <property type="molecule type" value="mRNA"/>
</dbReference>
<dbReference type="EMBL" id="M17607">
    <property type="protein sequence ID" value="AAA48672.1"/>
    <property type="molecule type" value="mRNA"/>
</dbReference>
<dbReference type="PIR" id="A27179">
    <property type="entry name" value="A27179"/>
</dbReference>
<dbReference type="PIR" id="A90458">
    <property type="entry name" value="CGCH1S"/>
</dbReference>
<dbReference type="PIR" id="I50629">
    <property type="entry name" value="I50629"/>
</dbReference>
<dbReference type="PIR" id="S07234">
    <property type="entry name" value="S07234"/>
</dbReference>
<dbReference type="ComplexPortal" id="CPX-3102">
    <property type="entry name" value="Collagen type I trimer"/>
</dbReference>
<dbReference type="FunCoup" id="P02457">
    <property type="interactions" value="642"/>
</dbReference>
<dbReference type="IntAct" id="P02457">
    <property type="interactions" value="1"/>
</dbReference>
<dbReference type="STRING" id="9031.ENSGALP00000058148"/>
<dbReference type="GlyCosmos" id="P02457">
    <property type="glycosylation" value="3 sites, No reported glycans"/>
</dbReference>
<dbReference type="GlyGen" id="P02457">
    <property type="glycosylation" value="9 sites"/>
</dbReference>
<dbReference type="PaxDb" id="9031-ENSGALP00000039595"/>
<dbReference type="VEuPathDB" id="HostDB:geneid_395069"/>
<dbReference type="VEuPathDB" id="HostDB:geneid_395532"/>
<dbReference type="VEuPathDB" id="HostDB:geneid_424526"/>
<dbReference type="InParanoid" id="P02457"/>
<dbReference type="OrthoDB" id="8939548at2759"/>
<dbReference type="Proteomes" id="UP000000539">
    <property type="component" value="Unassembled WGS sequence"/>
</dbReference>
<dbReference type="GO" id="GO:0005584">
    <property type="term" value="C:collagen type I trimer"/>
    <property type="evidence" value="ECO:0000318"/>
    <property type="project" value="GO_Central"/>
</dbReference>
<dbReference type="GO" id="GO:0062023">
    <property type="term" value="C:collagen-containing extracellular matrix"/>
    <property type="evidence" value="ECO:0000318"/>
    <property type="project" value="GO_Central"/>
</dbReference>
<dbReference type="GO" id="GO:0005737">
    <property type="term" value="C:cytoplasm"/>
    <property type="evidence" value="ECO:0000318"/>
    <property type="project" value="GO_Central"/>
</dbReference>
<dbReference type="GO" id="GO:0005615">
    <property type="term" value="C:extracellular space"/>
    <property type="evidence" value="ECO:0000318"/>
    <property type="project" value="GO_Central"/>
</dbReference>
<dbReference type="GO" id="GO:0030020">
    <property type="term" value="F:extracellular matrix structural constituent conferring tensile strength"/>
    <property type="evidence" value="ECO:0000318"/>
    <property type="project" value="GO_Central"/>
</dbReference>
<dbReference type="GO" id="GO:0046872">
    <property type="term" value="F:metal ion binding"/>
    <property type="evidence" value="ECO:0007669"/>
    <property type="project" value="UniProtKB-KW"/>
</dbReference>
<dbReference type="GO" id="GO:0001568">
    <property type="term" value="P:blood vessel development"/>
    <property type="evidence" value="ECO:0000318"/>
    <property type="project" value="GO_Central"/>
</dbReference>
<dbReference type="GO" id="GO:0001503">
    <property type="term" value="P:ossification"/>
    <property type="evidence" value="ECO:0000318"/>
    <property type="project" value="GO_Central"/>
</dbReference>
<dbReference type="GO" id="GO:0009612">
    <property type="term" value="P:response to mechanical stimulus"/>
    <property type="evidence" value="ECO:0000318"/>
    <property type="project" value="GO_Central"/>
</dbReference>
<dbReference type="GO" id="GO:0001501">
    <property type="term" value="P:skeletal system development"/>
    <property type="evidence" value="ECO:0000318"/>
    <property type="project" value="GO_Central"/>
</dbReference>
<dbReference type="GO" id="GO:0043588">
    <property type="term" value="P:skin development"/>
    <property type="evidence" value="ECO:0000318"/>
    <property type="project" value="GO_Central"/>
</dbReference>
<dbReference type="FunFam" id="2.60.120.1000:FF:000001">
    <property type="entry name" value="Collagen alpha-1 type I chain"/>
    <property type="match status" value="1"/>
</dbReference>
<dbReference type="FunFam" id="2.10.70.10:FF:000013">
    <property type="entry name" value="Collagen, type I, alpha 1"/>
    <property type="match status" value="1"/>
</dbReference>
<dbReference type="Gene3D" id="2.60.120.1000">
    <property type="match status" value="1"/>
</dbReference>
<dbReference type="Gene3D" id="2.10.70.10">
    <property type="entry name" value="Complement Module, domain 1"/>
    <property type="match status" value="1"/>
</dbReference>
<dbReference type="InterPro" id="IPR008160">
    <property type="entry name" value="Collagen"/>
</dbReference>
<dbReference type="InterPro" id="IPR050149">
    <property type="entry name" value="Collagen_superfamily"/>
</dbReference>
<dbReference type="InterPro" id="IPR000885">
    <property type="entry name" value="Fib_collagen_C"/>
</dbReference>
<dbReference type="InterPro" id="IPR001007">
    <property type="entry name" value="VWF_dom"/>
</dbReference>
<dbReference type="PANTHER" id="PTHR24023:SF1112">
    <property type="entry name" value="COL_CUTICLE_N DOMAIN-CONTAINING PROTEIN-RELATED"/>
    <property type="match status" value="1"/>
</dbReference>
<dbReference type="PANTHER" id="PTHR24023">
    <property type="entry name" value="COLLAGEN ALPHA"/>
    <property type="match status" value="1"/>
</dbReference>
<dbReference type="Pfam" id="PF01410">
    <property type="entry name" value="COLFI"/>
    <property type="match status" value="1"/>
</dbReference>
<dbReference type="Pfam" id="PF01391">
    <property type="entry name" value="Collagen"/>
    <property type="match status" value="11"/>
</dbReference>
<dbReference type="Pfam" id="PF00093">
    <property type="entry name" value="VWC"/>
    <property type="match status" value="1"/>
</dbReference>
<dbReference type="SMART" id="SM00038">
    <property type="entry name" value="COLFI"/>
    <property type="match status" value="1"/>
</dbReference>
<dbReference type="SMART" id="SM00214">
    <property type="entry name" value="VWC"/>
    <property type="match status" value="1"/>
</dbReference>
<dbReference type="SUPFAM" id="SSF57603">
    <property type="entry name" value="FnI-like domain"/>
    <property type="match status" value="1"/>
</dbReference>
<dbReference type="PROSITE" id="PS51461">
    <property type="entry name" value="NC1_FIB"/>
    <property type="match status" value="1"/>
</dbReference>
<dbReference type="PROSITE" id="PS01208">
    <property type="entry name" value="VWFC_1"/>
    <property type="match status" value="1"/>
</dbReference>
<dbReference type="PROSITE" id="PS50184">
    <property type="entry name" value="VWFC_2"/>
    <property type="match status" value="1"/>
</dbReference>